<organism>
    <name type="scientific">Staphylococcus aureus (strain MRSA252)</name>
    <dbReference type="NCBI Taxonomy" id="282458"/>
    <lineage>
        <taxon>Bacteria</taxon>
        <taxon>Bacillati</taxon>
        <taxon>Bacillota</taxon>
        <taxon>Bacilli</taxon>
        <taxon>Bacillales</taxon>
        <taxon>Staphylococcaceae</taxon>
        <taxon>Staphylococcus</taxon>
    </lineage>
</organism>
<feature type="chain" id="PRO_0000187817" description="Peptidyl-tRNA hydrolase">
    <location>
        <begin position="1"/>
        <end position="190"/>
    </location>
</feature>
<feature type="active site" description="Proton acceptor" evidence="1">
    <location>
        <position position="19"/>
    </location>
</feature>
<feature type="binding site" evidence="1">
    <location>
        <position position="14"/>
    </location>
    <ligand>
        <name>tRNA</name>
        <dbReference type="ChEBI" id="CHEBI:17843"/>
    </ligand>
</feature>
<feature type="binding site" evidence="1">
    <location>
        <position position="64"/>
    </location>
    <ligand>
        <name>tRNA</name>
        <dbReference type="ChEBI" id="CHEBI:17843"/>
    </ligand>
</feature>
<feature type="binding site" evidence="1">
    <location>
        <position position="66"/>
    </location>
    <ligand>
        <name>tRNA</name>
        <dbReference type="ChEBI" id="CHEBI:17843"/>
    </ligand>
</feature>
<feature type="binding site" evidence="1">
    <location>
        <position position="112"/>
    </location>
    <ligand>
        <name>tRNA</name>
        <dbReference type="ChEBI" id="CHEBI:17843"/>
    </ligand>
</feature>
<feature type="site" description="Discriminates between blocked and unblocked aminoacyl-tRNA" evidence="1">
    <location>
        <position position="9"/>
    </location>
</feature>
<feature type="site" description="Stabilizes the basic form of H active site to accept a proton" evidence="1">
    <location>
        <position position="91"/>
    </location>
</feature>
<comment type="function">
    <text evidence="1">Hydrolyzes ribosome-free peptidyl-tRNAs (with 1 or more amino acids incorporated), which drop off the ribosome during protein synthesis, or as a result of ribosome stalling.</text>
</comment>
<comment type="function">
    <text evidence="1">Catalyzes the release of premature peptidyl moieties from peptidyl-tRNA molecules trapped in stalled 50S ribosomal subunits, and thus maintains levels of free tRNAs and 50S ribosomes.</text>
</comment>
<comment type="catalytic activity">
    <reaction evidence="1">
        <text>an N-acyl-L-alpha-aminoacyl-tRNA + H2O = an N-acyl-L-amino acid + a tRNA + H(+)</text>
        <dbReference type="Rhea" id="RHEA:54448"/>
        <dbReference type="Rhea" id="RHEA-COMP:10123"/>
        <dbReference type="Rhea" id="RHEA-COMP:13883"/>
        <dbReference type="ChEBI" id="CHEBI:15377"/>
        <dbReference type="ChEBI" id="CHEBI:15378"/>
        <dbReference type="ChEBI" id="CHEBI:59874"/>
        <dbReference type="ChEBI" id="CHEBI:78442"/>
        <dbReference type="ChEBI" id="CHEBI:138191"/>
        <dbReference type="EC" id="3.1.1.29"/>
    </reaction>
</comment>
<comment type="subunit">
    <text evidence="1">Monomer.</text>
</comment>
<comment type="subcellular location">
    <subcellularLocation>
        <location evidence="1">Cytoplasm</location>
    </subcellularLocation>
</comment>
<comment type="similarity">
    <text evidence="1">Belongs to the PTH family.</text>
</comment>
<proteinExistence type="inferred from homology"/>
<name>PTH_STAAR</name>
<protein>
    <recommendedName>
        <fullName evidence="1">Peptidyl-tRNA hydrolase</fullName>
        <shortName evidence="1">Pth</shortName>
        <ecNumber evidence="1">3.1.1.29</ecNumber>
    </recommendedName>
</protein>
<gene>
    <name evidence="1" type="primary">pth</name>
    <name type="ordered locus">SAR0503</name>
</gene>
<sequence>MKCIVGLGNIGKRFELTRHNIGFEVVDYILEKNNFSLDKQKFKGAYTIERMNGDKVLFIEPMTMMNLSGEAVAPIMDYYNVNPEDLIVLYDDLDLEQGQVRLRQKGSAGGHNGMKSIIKMLGTDQFKRIRIGVGRPTNGMTVPDYVLQRFSNDEMVTMEKVIEHAARAIEKFVETSRFDHVMNEFNGEVK</sequence>
<reference key="1">
    <citation type="journal article" date="2004" name="Proc. Natl. Acad. Sci. U.S.A.">
        <title>Complete genomes of two clinical Staphylococcus aureus strains: evidence for the rapid evolution of virulence and drug resistance.</title>
        <authorList>
            <person name="Holden M.T.G."/>
            <person name="Feil E.J."/>
            <person name="Lindsay J.A."/>
            <person name="Peacock S.J."/>
            <person name="Day N.P.J."/>
            <person name="Enright M.C."/>
            <person name="Foster T.J."/>
            <person name="Moore C.E."/>
            <person name="Hurst L."/>
            <person name="Atkin R."/>
            <person name="Barron A."/>
            <person name="Bason N."/>
            <person name="Bentley S.D."/>
            <person name="Chillingworth C."/>
            <person name="Chillingworth T."/>
            <person name="Churcher C."/>
            <person name="Clark L."/>
            <person name="Corton C."/>
            <person name="Cronin A."/>
            <person name="Doggett J."/>
            <person name="Dowd L."/>
            <person name="Feltwell T."/>
            <person name="Hance Z."/>
            <person name="Harris B."/>
            <person name="Hauser H."/>
            <person name="Holroyd S."/>
            <person name="Jagels K."/>
            <person name="James K.D."/>
            <person name="Lennard N."/>
            <person name="Line A."/>
            <person name="Mayes R."/>
            <person name="Moule S."/>
            <person name="Mungall K."/>
            <person name="Ormond D."/>
            <person name="Quail M.A."/>
            <person name="Rabbinowitsch E."/>
            <person name="Rutherford K.M."/>
            <person name="Sanders M."/>
            <person name="Sharp S."/>
            <person name="Simmonds M."/>
            <person name="Stevens K."/>
            <person name="Whitehead S."/>
            <person name="Barrell B.G."/>
            <person name="Spratt B.G."/>
            <person name="Parkhill J."/>
        </authorList>
    </citation>
    <scope>NUCLEOTIDE SEQUENCE [LARGE SCALE GENOMIC DNA]</scope>
    <source>
        <strain>MRSA252</strain>
    </source>
</reference>
<evidence type="ECO:0000255" key="1">
    <source>
        <dbReference type="HAMAP-Rule" id="MF_00083"/>
    </source>
</evidence>
<accession>Q6GJG9</accession>
<dbReference type="EC" id="3.1.1.29" evidence="1"/>
<dbReference type="EMBL" id="BX571856">
    <property type="protein sequence ID" value="CAG39525.1"/>
    <property type="molecule type" value="Genomic_DNA"/>
</dbReference>
<dbReference type="RefSeq" id="WP_000649791.1">
    <property type="nucleotide sequence ID" value="NC_002952.2"/>
</dbReference>
<dbReference type="SMR" id="Q6GJG9"/>
<dbReference type="KEGG" id="sar:SAR0503"/>
<dbReference type="HOGENOM" id="CLU_062456_4_1_9"/>
<dbReference type="Proteomes" id="UP000000596">
    <property type="component" value="Chromosome"/>
</dbReference>
<dbReference type="GO" id="GO:0005737">
    <property type="term" value="C:cytoplasm"/>
    <property type="evidence" value="ECO:0007669"/>
    <property type="project" value="UniProtKB-SubCell"/>
</dbReference>
<dbReference type="GO" id="GO:0004045">
    <property type="term" value="F:peptidyl-tRNA hydrolase activity"/>
    <property type="evidence" value="ECO:0007669"/>
    <property type="project" value="UniProtKB-UniRule"/>
</dbReference>
<dbReference type="GO" id="GO:0000049">
    <property type="term" value="F:tRNA binding"/>
    <property type="evidence" value="ECO:0007669"/>
    <property type="project" value="UniProtKB-UniRule"/>
</dbReference>
<dbReference type="GO" id="GO:0006515">
    <property type="term" value="P:protein quality control for misfolded or incompletely synthesized proteins"/>
    <property type="evidence" value="ECO:0007669"/>
    <property type="project" value="UniProtKB-UniRule"/>
</dbReference>
<dbReference type="GO" id="GO:0072344">
    <property type="term" value="P:rescue of stalled ribosome"/>
    <property type="evidence" value="ECO:0007669"/>
    <property type="project" value="UniProtKB-UniRule"/>
</dbReference>
<dbReference type="CDD" id="cd00462">
    <property type="entry name" value="PTH"/>
    <property type="match status" value="1"/>
</dbReference>
<dbReference type="FunFam" id="3.40.50.1470:FF:000001">
    <property type="entry name" value="Peptidyl-tRNA hydrolase"/>
    <property type="match status" value="1"/>
</dbReference>
<dbReference type="Gene3D" id="3.40.50.1470">
    <property type="entry name" value="Peptidyl-tRNA hydrolase"/>
    <property type="match status" value="1"/>
</dbReference>
<dbReference type="HAMAP" id="MF_00083">
    <property type="entry name" value="Pept_tRNA_hydro_bact"/>
    <property type="match status" value="1"/>
</dbReference>
<dbReference type="InterPro" id="IPR001328">
    <property type="entry name" value="Pept_tRNA_hydro"/>
</dbReference>
<dbReference type="InterPro" id="IPR018171">
    <property type="entry name" value="Pept_tRNA_hydro_CS"/>
</dbReference>
<dbReference type="InterPro" id="IPR036416">
    <property type="entry name" value="Pept_tRNA_hydro_sf"/>
</dbReference>
<dbReference type="NCBIfam" id="TIGR00447">
    <property type="entry name" value="pth"/>
    <property type="match status" value="1"/>
</dbReference>
<dbReference type="PANTHER" id="PTHR17224">
    <property type="entry name" value="PEPTIDYL-TRNA HYDROLASE"/>
    <property type="match status" value="1"/>
</dbReference>
<dbReference type="PANTHER" id="PTHR17224:SF1">
    <property type="entry name" value="PEPTIDYL-TRNA HYDROLASE"/>
    <property type="match status" value="1"/>
</dbReference>
<dbReference type="Pfam" id="PF01195">
    <property type="entry name" value="Pept_tRNA_hydro"/>
    <property type="match status" value="1"/>
</dbReference>
<dbReference type="SUPFAM" id="SSF53178">
    <property type="entry name" value="Peptidyl-tRNA hydrolase-like"/>
    <property type="match status" value="1"/>
</dbReference>
<dbReference type="PROSITE" id="PS01195">
    <property type="entry name" value="PEPT_TRNA_HYDROL_1"/>
    <property type="match status" value="1"/>
</dbReference>
<dbReference type="PROSITE" id="PS01196">
    <property type="entry name" value="PEPT_TRNA_HYDROL_2"/>
    <property type="match status" value="1"/>
</dbReference>
<keyword id="KW-0963">Cytoplasm</keyword>
<keyword id="KW-0378">Hydrolase</keyword>
<keyword id="KW-0694">RNA-binding</keyword>
<keyword id="KW-0820">tRNA-binding</keyword>